<proteinExistence type="inferred from homology"/>
<protein>
    <recommendedName>
        <fullName evidence="1">ATP synthase subunit beta 2</fullName>
        <ecNumber evidence="1">7.1.2.2</ecNumber>
    </recommendedName>
    <alternativeName>
        <fullName evidence="1">ATP synthase F1 sector subunit beta 2</fullName>
    </alternativeName>
    <alternativeName>
        <fullName evidence="1">F-ATPase subunit beta 2</fullName>
    </alternativeName>
</protein>
<feature type="chain" id="PRO_0000339581" description="ATP synthase subunit beta 2">
    <location>
        <begin position="1"/>
        <end position="518"/>
    </location>
</feature>
<feature type="region of interest" description="Disordered" evidence="2">
    <location>
        <begin position="455"/>
        <end position="518"/>
    </location>
</feature>
<feature type="compositionally biased region" description="Basic and acidic residues" evidence="2">
    <location>
        <begin position="473"/>
        <end position="485"/>
    </location>
</feature>
<feature type="compositionally biased region" description="Basic and acidic residues" evidence="2">
    <location>
        <begin position="507"/>
        <end position="518"/>
    </location>
</feature>
<feature type="binding site" evidence="1">
    <location>
        <begin position="154"/>
        <end position="161"/>
    </location>
    <ligand>
        <name>ATP</name>
        <dbReference type="ChEBI" id="CHEBI:30616"/>
    </ligand>
</feature>
<keyword id="KW-0066">ATP synthesis</keyword>
<keyword id="KW-0067">ATP-binding</keyword>
<keyword id="KW-0997">Cell inner membrane</keyword>
<keyword id="KW-1003">Cell membrane</keyword>
<keyword id="KW-0139">CF(1)</keyword>
<keyword id="KW-0375">Hydrogen ion transport</keyword>
<keyword id="KW-0406">Ion transport</keyword>
<keyword id="KW-0472">Membrane</keyword>
<keyword id="KW-0547">Nucleotide-binding</keyword>
<keyword id="KW-1185">Reference proteome</keyword>
<keyword id="KW-1278">Translocase</keyword>
<keyword id="KW-0813">Transport</keyword>
<name>ATPB2_ALBFT</name>
<reference key="1">
    <citation type="submission" date="2006-02" db="EMBL/GenBank/DDBJ databases">
        <title>Complete sequence of chromosome of Rhodoferax ferrireducens DSM 15236.</title>
        <authorList>
            <person name="Copeland A."/>
            <person name="Lucas S."/>
            <person name="Lapidus A."/>
            <person name="Barry K."/>
            <person name="Detter J.C."/>
            <person name="Glavina del Rio T."/>
            <person name="Hammon N."/>
            <person name="Israni S."/>
            <person name="Pitluck S."/>
            <person name="Brettin T."/>
            <person name="Bruce D."/>
            <person name="Han C."/>
            <person name="Tapia R."/>
            <person name="Gilna P."/>
            <person name="Kiss H."/>
            <person name="Schmutz J."/>
            <person name="Larimer F."/>
            <person name="Land M."/>
            <person name="Kyrpides N."/>
            <person name="Ivanova N."/>
            <person name="Richardson P."/>
        </authorList>
    </citation>
    <scope>NUCLEOTIDE SEQUENCE [LARGE SCALE GENOMIC DNA]</scope>
    <source>
        <strain>ATCC BAA-621 / DSM 15236 / T118</strain>
    </source>
</reference>
<gene>
    <name evidence="1" type="primary">atpD2</name>
    <name type="ordered locus">Rfer_1161</name>
</gene>
<accession>Q21ZA6</accession>
<comment type="function">
    <text evidence="1">Produces ATP from ADP in the presence of a proton gradient across the membrane. The catalytic sites are hosted primarily by the beta subunits.</text>
</comment>
<comment type="catalytic activity">
    <reaction evidence="1">
        <text>ATP + H2O + 4 H(+)(in) = ADP + phosphate + 5 H(+)(out)</text>
        <dbReference type="Rhea" id="RHEA:57720"/>
        <dbReference type="ChEBI" id="CHEBI:15377"/>
        <dbReference type="ChEBI" id="CHEBI:15378"/>
        <dbReference type="ChEBI" id="CHEBI:30616"/>
        <dbReference type="ChEBI" id="CHEBI:43474"/>
        <dbReference type="ChEBI" id="CHEBI:456216"/>
        <dbReference type="EC" id="7.1.2.2"/>
    </reaction>
</comment>
<comment type="subunit">
    <text evidence="1">F-type ATPases have 2 components, CF(1) - the catalytic core - and CF(0) - the membrane proton channel. CF(1) has five subunits: alpha(3), beta(3), gamma(1), delta(1), epsilon(1). CF(0) has three main subunits: a(1), b(2) and c(9-12). The alpha and beta chains form an alternating ring which encloses part of the gamma chain. CF(1) is attached to CF(0) by a central stalk formed by the gamma and epsilon chains, while a peripheral stalk is formed by the delta and b chains.</text>
</comment>
<comment type="subcellular location">
    <subcellularLocation>
        <location evidence="1">Cell inner membrane</location>
        <topology evidence="1">Peripheral membrane protein</topology>
    </subcellularLocation>
</comment>
<comment type="similarity">
    <text evidence="1">Belongs to the ATPase alpha/beta chains family.</text>
</comment>
<evidence type="ECO:0000255" key="1">
    <source>
        <dbReference type="HAMAP-Rule" id="MF_01347"/>
    </source>
</evidence>
<evidence type="ECO:0000256" key="2">
    <source>
        <dbReference type="SAM" id="MobiDB-lite"/>
    </source>
</evidence>
<organism>
    <name type="scientific">Albidiferax ferrireducens (strain ATCC BAA-621 / DSM 15236 / T118)</name>
    <name type="common">Rhodoferax ferrireducens</name>
    <dbReference type="NCBI Taxonomy" id="338969"/>
    <lineage>
        <taxon>Bacteria</taxon>
        <taxon>Pseudomonadati</taxon>
        <taxon>Pseudomonadota</taxon>
        <taxon>Betaproteobacteria</taxon>
        <taxon>Burkholderiales</taxon>
        <taxon>Comamonadaceae</taxon>
        <taxon>Rhodoferax</taxon>
    </lineage>
</organism>
<sequence length="518" mass="56308">MGDETSPLNLGTVVSVRGSVVDIRFDDDLPSIHTILRANEGEIVLEVLAQHDARHVRAIALTPTQGLARGMAVQDTGGPLKAPVGKGSLSRMFDVFGNTIDRETALSDVQWRSVHRAPPPLARRSTKSEIFETGIKVIDVLMPLERGGKAGLFGGAGVGKTVLLTEMIHNMVGQHEGVSIFCGIGERCREGEELYRDMKQAGVLPNMVMIFAQMNEPPGARFRVGHAALTMAEYFRDDEHRDMLLLIDNIFRFIQAGMEVSGLMGQMPSRLGYQPTMGTELSGLEERIANTDTGAITSIQAVYVPADDFTDPAAVHTFSHLSASIVLSRKRASEGLYPAIDPLQSSSKMATPSIVGARHYGLAQEIRRTLAQYAELKDIIAMLGLEQLSPEDRNVVARARRLERFLTQPFFTTEQFTGHKGKLVSLKDALDGCERILRDEFKDHPESALYMIGTIDEAKGKAKPPAPATPSEPDSKTEARADPKPAAESPAKAIPGPHPQSGAKPQPETDHAADTHES</sequence>
<dbReference type="EC" id="7.1.2.2" evidence="1"/>
<dbReference type="EMBL" id="CP000267">
    <property type="protein sequence ID" value="ABD68897.1"/>
    <property type="molecule type" value="Genomic_DNA"/>
</dbReference>
<dbReference type="RefSeq" id="WP_011463466.1">
    <property type="nucleotide sequence ID" value="NC_007908.1"/>
</dbReference>
<dbReference type="SMR" id="Q21ZA6"/>
<dbReference type="STRING" id="338969.Rfer_1161"/>
<dbReference type="KEGG" id="rfr:Rfer_1161"/>
<dbReference type="eggNOG" id="COG0055">
    <property type="taxonomic scope" value="Bacteria"/>
</dbReference>
<dbReference type="HOGENOM" id="CLU_022398_0_2_4"/>
<dbReference type="OrthoDB" id="9801639at2"/>
<dbReference type="Proteomes" id="UP000008332">
    <property type="component" value="Chromosome"/>
</dbReference>
<dbReference type="GO" id="GO:0005886">
    <property type="term" value="C:plasma membrane"/>
    <property type="evidence" value="ECO:0007669"/>
    <property type="project" value="UniProtKB-SubCell"/>
</dbReference>
<dbReference type="GO" id="GO:0045259">
    <property type="term" value="C:proton-transporting ATP synthase complex"/>
    <property type="evidence" value="ECO:0007669"/>
    <property type="project" value="UniProtKB-KW"/>
</dbReference>
<dbReference type="GO" id="GO:0005524">
    <property type="term" value="F:ATP binding"/>
    <property type="evidence" value="ECO:0007669"/>
    <property type="project" value="UniProtKB-UniRule"/>
</dbReference>
<dbReference type="GO" id="GO:0016887">
    <property type="term" value="F:ATP hydrolysis activity"/>
    <property type="evidence" value="ECO:0007669"/>
    <property type="project" value="InterPro"/>
</dbReference>
<dbReference type="GO" id="GO:0046933">
    <property type="term" value="F:proton-transporting ATP synthase activity, rotational mechanism"/>
    <property type="evidence" value="ECO:0007669"/>
    <property type="project" value="UniProtKB-UniRule"/>
</dbReference>
<dbReference type="GO" id="GO:0046961">
    <property type="term" value="F:proton-transporting ATPase activity, rotational mechanism"/>
    <property type="evidence" value="ECO:0007669"/>
    <property type="project" value="InterPro"/>
</dbReference>
<dbReference type="CDD" id="cd18110">
    <property type="entry name" value="ATP-synt_F1_beta_C"/>
    <property type="match status" value="1"/>
</dbReference>
<dbReference type="CDD" id="cd18115">
    <property type="entry name" value="ATP-synt_F1_beta_N"/>
    <property type="match status" value="1"/>
</dbReference>
<dbReference type="CDD" id="cd01133">
    <property type="entry name" value="F1-ATPase_beta_CD"/>
    <property type="match status" value="1"/>
</dbReference>
<dbReference type="FunFam" id="1.10.1140.10:FF:000006">
    <property type="entry name" value="ATP synthase subunit beta"/>
    <property type="match status" value="1"/>
</dbReference>
<dbReference type="FunFam" id="3.40.50.300:FF:001630">
    <property type="entry name" value="ATP synthase subunit beta"/>
    <property type="match status" value="1"/>
</dbReference>
<dbReference type="Gene3D" id="2.40.10.170">
    <property type="match status" value="1"/>
</dbReference>
<dbReference type="Gene3D" id="1.10.1140.10">
    <property type="entry name" value="Bovine Mitochondrial F1-atpase, Atp Synthase Beta Chain, Chain D, domain 3"/>
    <property type="match status" value="1"/>
</dbReference>
<dbReference type="Gene3D" id="3.40.50.300">
    <property type="entry name" value="P-loop containing nucleotide triphosphate hydrolases"/>
    <property type="match status" value="1"/>
</dbReference>
<dbReference type="HAMAP" id="MF_01347">
    <property type="entry name" value="ATP_synth_beta_bact"/>
    <property type="match status" value="1"/>
</dbReference>
<dbReference type="InterPro" id="IPR003593">
    <property type="entry name" value="AAA+_ATPase"/>
</dbReference>
<dbReference type="InterPro" id="IPR017691">
    <property type="entry name" value="Alt_ATPase_F1_bsu"/>
</dbReference>
<dbReference type="InterPro" id="IPR055190">
    <property type="entry name" value="ATP-synt_VA_C"/>
</dbReference>
<dbReference type="InterPro" id="IPR005722">
    <property type="entry name" value="ATP_synth_F1_bsu"/>
</dbReference>
<dbReference type="InterPro" id="IPR020003">
    <property type="entry name" value="ATPase_a/bsu_AS"/>
</dbReference>
<dbReference type="InterPro" id="IPR050053">
    <property type="entry name" value="ATPase_alpha/beta_chains"/>
</dbReference>
<dbReference type="InterPro" id="IPR004100">
    <property type="entry name" value="ATPase_F1/V1/A1_a/bsu_N"/>
</dbReference>
<dbReference type="InterPro" id="IPR036121">
    <property type="entry name" value="ATPase_F1/V1/A1_a/bsu_N_sf"/>
</dbReference>
<dbReference type="InterPro" id="IPR000194">
    <property type="entry name" value="ATPase_F1/V1/A1_a/bsu_nucl-bd"/>
</dbReference>
<dbReference type="InterPro" id="IPR024034">
    <property type="entry name" value="ATPase_F1/V1_b/a_C"/>
</dbReference>
<dbReference type="InterPro" id="IPR027417">
    <property type="entry name" value="P-loop_NTPase"/>
</dbReference>
<dbReference type="NCBIfam" id="TIGR03305">
    <property type="entry name" value="alt_F1F0_F1_bet"/>
    <property type="match status" value="1"/>
</dbReference>
<dbReference type="NCBIfam" id="TIGR01039">
    <property type="entry name" value="atpD"/>
    <property type="match status" value="1"/>
</dbReference>
<dbReference type="PANTHER" id="PTHR15184">
    <property type="entry name" value="ATP SYNTHASE"/>
    <property type="match status" value="1"/>
</dbReference>
<dbReference type="PANTHER" id="PTHR15184:SF71">
    <property type="entry name" value="ATP SYNTHASE SUBUNIT BETA, MITOCHONDRIAL"/>
    <property type="match status" value="1"/>
</dbReference>
<dbReference type="Pfam" id="PF00006">
    <property type="entry name" value="ATP-synt_ab"/>
    <property type="match status" value="1"/>
</dbReference>
<dbReference type="Pfam" id="PF02874">
    <property type="entry name" value="ATP-synt_ab_N"/>
    <property type="match status" value="1"/>
</dbReference>
<dbReference type="Pfam" id="PF22919">
    <property type="entry name" value="ATP-synt_VA_C"/>
    <property type="match status" value="1"/>
</dbReference>
<dbReference type="SMART" id="SM00382">
    <property type="entry name" value="AAA"/>
    <property type="match status" value="1"/>
</dbReference>
<dbReference type="SUPFAM" id="SSF47917">
    <property type="entry name" value="C-terminal domain of alpha and beta subunits of F1 ATP synthase"/>
    <property type="match status" value="1"/>
</dbReference>
<dbReference type="SUPFAM" id="SSF50615">
    <property type="entry name" value="N-terminal domain of alpha and beta subunits of F1 ATP synthase"/>
    <property type="match status" value="1"/>
</dbReference>
<dbReference type="SUPFAM" id="SSF52540">
    <property type="entry name" value="P-loop containing nucleoside triphosphate hydrolases"/>
    <property type="match status" value="1"/>
</dbReference>
<dbReference type="PROSITE" id="PS00152">
    <property type="entry name" value="ATPASE_ALPHA_BETA"/>
    <property type="match status" value="1"/>
</dbReference>